<gene>
    <name type="ordered locus">At3g22670</name>
    <name type="ORF">MWI23.4</name>
</gene>
<sequence>MLTKLRISKLVSYTLPRRIFQRRFLVTNNTAEESPIVAAESPELPSWIKDFLSNKPSSSSSSVSKDDEDFVIPSLANWVESQKFSRQQVSEGNVVKKPVEDIDKVCDFLNKKDTSHEDVVKELSKCDVVVTESLVLQVLRRFSNGWNQAYGFFIWANSQTGYVHSGHTYNAMVDVLGKCRNFDLMWELVNEMNKNEESKLVTLDTMSKVMRRLAKSGKYNKAVDAFLEMEKSYGVKTDTIAMNSLMDALVKENSIEHAHEVFLKLFDTIKPDARTFNILIHGFCKARKFDDARAMMDLMKVTEFTPDVVTYTSFVEAYCKEGDFRRVNEMLEEMRENGCNPNVVTYTIVMHSLGKSKQVAEALGVYEKMKEDGCVPDAKFYSSLIHILSKTGRFKDAAEIFEDMTNQGVRRDVLVYNTMISAALHHSRDEMALRLLKRMEDEEGESCSPNVETYAPLLKMCCHKKKMKLLGILLHHMVKNDVSIDVSTYILLIRGLCMSGKVEEACLFFEEAVRKGMVPRDSTCKMLVDELEKKNMAEAKLKIQSLVQSKTMIDSHSPLSVS</sequence>
<comment type="subcellular location">
    <subcellularLocation>
        <location evidence="2">Mitochondrion</location>
    </subcellularLocation>
</comment>
<comment type="similarity">
    <text evidence="2">Belongs to the PPR family. P subfamily.</text>
</comment>
<comment type="online information" name="Pentatricopeptide repeat proteins">
    <link uri="https://ppr.plantenergy.uwa.edu.au"/>
</comment>
<dbReference type="EMBL" id="AB022223">
    <property type="protein sequence ID" value="BAB01242.1"/>
    <property type="molecule type" value="Genomic_DNA"/>
</dbReference>
<dbReference type="EMBL" id="CP002686">
    <property type="protein sequence ID" value="AEE76663.1"/>
    <property type="molecule type" value="Genomic_DNA"/>
</dbReference>
<dbReference type="RefSeq" id="NP_188906.1">
    <property type="nucleotide sequence ID" value="NM_113166.2"/>
</dbReference>
<dbReference type="SMR" id="Q9LUJ4"/>
<dbReference type="STRING" id="3702.Q9LUJ4"/>
<dbReference type="PaxDb" id="3702-AT3G22670.1"/>
<dbReference type="ProteomicsDB" id="249098"/>
<dbReference type="EnsemblPlants" id="AT3G22670.1">
    <property type="protein sequence ID" value="AT3G22670.1"/>
    <property type="gene ID" value="AT3G22670"/>
</dbReference>
<dbReference type="GeneID" id="821838"/>
<dbReference type="Gramene" id="AT3G22670.1">
    <property type="protein sequence ID" value="AT3G22670.1"/>
    <property type="gene ID" value="AT3G22670"/>
</dbReference>
<dbReference type="KEGG" id="ath:AT3G22670"/>
<dbReference type="Araport" id="AT3G22670"/>
<dbReference type="TAIR" id="AT3G22670"/>
<dbReference type="eggNOG" id="KOG4197">
    <property type="taxonomic scope" value="Eukaryota"/>
</dbReference>
<dbReference type="HOGENOM" id="CLU_002706_49_20_1"/>
<dbReference type="InParanoid" id="Q9LUJ4"/>
<dbReference type="OMA" id="FIEAYCH"/>
<dbReference type="OrthoDB" id="185373at2759"/>
<dbReference type="PhylomeDB" id="Q9LUJ4"/>
<dbReference type="PRO" id="PR:Q9LUJ4"/>
<dbReference type="Proteomes" id="UP000006548">
    <property type="component" value="Chromosome 3"/>
</dbReference>
<dbReference type="ExpressionAtlas" id="Q9LUJ4">
    <property type="expression patterns" value="baseline and differential"/>
</dbReference>
<dbReference type="GO" id="GO:0005739">
    <property type="term" value="C:mitochondrion"/>
    <property type="evidence" value="ECO:0007669"/>
    <property type="project" value="UniProtKB-SubCell"/>
</dbReference>
<dbReference type="Gene3D" id="1.25.40.10">
    <property type="entry name" value="Tetratricopeptide repeat domain"/>
    <property type="match status" value="4"/>
</dbReference>
<dbReference type="InterPro" id="IPR002885">
    <property type="entry name" value="Pentatricopeptide_rpt"/>
</dbReference>
<dbReference type="InterPro" id="IPR011990">
    <property type="entry name" value="TPR-like_helical_dom_sf"/>
</dbReference>
<dbReference type="NCBIfam" id="TIGR00756">
    <property type="entry name" value="PPR"/>
    <property type="match status" value="7"/>
</dbReference>
<dbReference type="PANTHER" id="PTHR47936:SF1">
    <property type="entry name" value="PENTATRICOPEPTIDE REPEAT-CONTAINING PROTEIN GUN1, CHLOROPLASTIC"/>
    <property type="match status" value="1"/>
</dbReference>
<dbReference type="PANTHER" id="PTHR47936">
    <property type="entry name" value="PPR_LONG DOMAIN-CONTAINING PROTEIN"/>
    <property type="match status" value="1"/>
</dbReference>
<dbReference type="Pfam" id="PF01535">
    <property type="entry name" value="PPR"/>
    <property type="match status" value="3"/>
</dbReference>
<dbReference type="Pfam" id="PF12854">
    <property type="entry name" value="PPR_1"/>
    <property type="match status" value="2"/>
</dbReference>
<dbReference type="Pfam" id="PF13041">
    <property type="entry name" value="PPR_2"/>
    <property type="match status" value="1"/>
</dbReference>
<dbReference type="Pfam" id="PF13812">
    <property type="entry name" value="PPR_3"/>
    <property type="match status" value="1"/>
</dbReference>
<dbReference type="SUPFAM" id="SSF81901">
    <property type="entry name" value="HCP-like"/>
    <property type="match status" value="1"/>
</dbReference>
<dbReference type="PROSITE" id="PS51375">
    <property type="entry name" value="PPR"/>
    <property type="match status" value="10"/>
</dbReference>
<feature type="transit peptide" description="Mitochondrion" evidence="1">
    <location>
        <begin position="1"/>
        <end position="31"/>
    </location>
</feature>
<feature type="chain" id="PRO_0000356107" description="Pentatricopeptide repeat-containing protein At3g22670, mitochondrial">
    <location>
        <begin position="32"/>
        <end position="562"/>
    </location>
</feature>
<feature type="repeat" description="PPR 1">
    <location>
        <begin position="165"/>
        <end position="199"/>
    </location>
</feature>
<feature type="repeat" description="PPR 2">
    <location>
        <begin position="202"/>
        <end position="232"/>
    </location>
</feature>
<feature type="repeat" description="PPR 3">
    <location>
        <begin position="238"/>
        <end position="268"/>
    </location>
</feature>
<feature type="repeat" description="PPR 4">
    <location>
        <begin position="272"/>
        <end position="306"/>
    </location>
</feature>
<feature type="repeat" description="PPR 5">
    <location>
        <begin position="307"/>
        <end position="341"/>
    </location>
</feature>
<feature type="repeat" description="PPR 6">
    <location>
        <begin position="342"/>
        <end position="376"/>
    </location>
</feature>
<feature type="repeat" description="PPR 7">
    <location>
        <begin position="377"/>
        <end position="411"/>
    </location>
</feature>
<feature type="repeat" description="PPR 8">
    <location>
        <begin position="412"/>
        <end position="446"/>
    </location>
</feature>
<feature type="repeat" description="PPR 9">
    <location>
        <begin position="450"/>
        <end position="484"/>
    </location>
</feature>
<feature type="repeat" description="PPR 10">
    <location>
        <begin position="485"/>
        <end position="519"/>
    </location>
</feature>
<keyword id="KW-0496">Mitochondrion</keyword>
<keyword id="KW-1185">Reference proteome</keyword>
<keyword id="KW-0677">Repeat</keyword>
<keyword id="KW-0809">Transit peptide</keyword>
<organism>
    <name type="scientific">Arabidopsis thaliana</name>
    <name type="common">Mouse-ear cress</name>
    <dbReference type="NCBI Taxonomy" id="3702"/>
    <lineage>
        <taxon>Eukaryota</taxon>
        <taxon>Viridiplantae</taxon>
        <taxon>Streptophyta</taxon>
        <taxon>Embryophyta</taxon>
        <taxon>Tracheophyta</taxon>
        <taxon>Spermatophyta</taxon>
        <taxon>Magnoliopsida</taxon>
        <taxon>eudicotyledons</taxon>
        <taxon>Gunneridae</taxon>
        <taxon>Pentapetalae</taxon>
        <taxon>rosids</taxon>
        <taxon>malvids</taxon>
        <taxon>Brassicales</taxon>
        <taxon>Brassicaceae</taxon>
        <taxon>Camelineae</taxon>
        <taxon>Arabidopsis</taxon>
    </lineage>
</organism>
<accession>Q9LUJ4</accession>
<proteinExistence type="evidence at transcript level"/>
<evidence type="ECO:0000255" key="1"/>
<evidence type="ECO:0000305" key="2"/>
<reference key="1">
    <citation type="journal article" date="2000" name="DNA Res.">
        <title>Structural analysis of Arabidopsis thaliana chromosome 3. I. Sequence features of the regions of 4,504,864 bp covered by sixty P1 and TAC clones.</title>
        <authorList>
            <person name="Sato S."/>
            <person name="Nakamura Y."/>
            <person name="Kaneko T."/>
            <person name="Katoh T."/>
            <person name="Asamizu E."/>
            <person name="Tabata S."/>
        </authorList>
    </citation>
    <scope>NUCLEOTIDE SEQUENCE [LARGE SCALE GENOMIC DNA]</scope>
    <source>
        <strain>cv. Columbia</strain>
    </source>
</reference>
<reference key="2">
    <citation type="journal article" date="2017" name="Plant J.">
        <title>Araport11: a complete reannotation of the Arabidopsis thaliana reference genome.</title>
        <authorList>
            <person name="Cheng C.Y."/>
            <person name="Krishnakumar V."/>
            <person name="Chan A.P."/>
            <person name="Thibaud-Nissen F."/>
            <person name="Schobel S."/>
            <person name="Town C.D."/>
        </authorList>
    </citation>
    <scope>GENOME REANNOTATION</scope>
    <source>
        <strain>cv. Columbia</strain>
    </source>
</reference>
<reference key="3">
    <citation type="journal article" date="2004" name="Plant Cell">
        <title>Genome-wide analysis of Arabidopsis pentatricopeptide repeat proteins reveals their essential role in organelle biogenesis.</title>
        <authorList>
            <person name="Lurin C."/>
            <person name="Andres C."/>
            <person name="Aubourg S."/>
            <person name="Bellaoui M."/>
            <person name="Bitton F."/>
            <person name="Bruyere C."/>
            <person name="Caboche M."/>
            <person name="Debast C."/>
            <person name="Gualberto J."/>
            <person name="Hoffmann B."/>
            <person name="Lecharny A."/>
            <person name="Le Ret M."/>
            <person name="Martin-Magniette M.-L."/>
            <person name="Mireau H."/>
            <person name="Peeters N."/>
            <person name="Renou J.-P."/>
            <person name="Szurek B."/>
            <person name="Taconnat L."/>
            <person name="Small I."/>
        </authorList>
    </citation>
    <scope>GENE FAMILY</scope>
</reference>
<name>PP248_ARATH</name>
<protein>
    <recommendedName>
        <fullName>Pentatricopeptide repeat-containing protein At3g22670, mitochondrial</fullName>
    </recommendedName>
</protein>